<proteinExistence type="evidence at protein level"/>
<protein>
    <recommendedName>
        <fullName evidence="6">Fatty acid resistance protein FarA</fullName>
    </recommendedName>
    <alternativeName>
        <fullName evidence="6">Efflux pump protein FarA</fullName>
    </alternativeName>
</protein>
<sequence length="394" mass="42528">MKSGNSEPNLMETHTDETKLQNTQVKRKRRLTALTLLFALSAAAAGSAFFLWWQHEEETEDAYVAGRVVQVTPQKGGTVRKVLHDDTDAVKKGDVLAVLDDDNDVLAYERAKNELVQAVRQNRRQNAATSQAGAQVALRRADLARAQDDLRRRSALAESGAVSAEELAHARTAVSQAQAAVKAALAEESSARAALGGDVSLREQPEVQTAIGRLKDAWLNLRRTQVRAPADGQVAKRSVQVGQQVAAGAPLMAVVPLSDVWVDANFKETQLRHMKIGQPAELVSDLYGKQIVYRGRVAGFSAGTGSAFSLIPAQNATGNWIKVVQRVPVRIVLNREDVDRHPLRIGLSMTVKVDTSAAGAPVSKTPGAALPEMESTDWSEVDRTVDEILGQSAP</sequence>
<name>FARA_NEIGO</name>
<evidence type="ECO:0000255" key="1"/>
<evidence type="ECO:0000256" key="2">
    <source>
        <dbReference type="SAM" id="MobiDB-lite"/>
    </source>
</evidence>
<evidence type="ECO:0000269" key="3">
    <source>
    </source>
</evidence>
<evidence type="ECO:0000269" key="4">
    <source>
    </source>
</evidence>
<evidence type="ECO:0000303" key="5">
    <source>
    </source>
</evidence>
<evidence type="ECO:0000305" key="6"/>
<evidence type="ECO:0000305" key="7">
    <source>
    </source>
</evidence>
<comment type="function">
    <text evidence="3">Mediates resistance to long-chained antibacterial fatty acids (FAs) (PubMed:10447892). Function is dependent on the MtrE outer membrane protein (PubMed:10447892).</text>
</comment>
<comment type="subunit">
    <text evidence="7">Probably part of a tripartite efflux system FarAB-MtrE, which is composed of an inner membrane transporter, FarB, a periplasmic membrane fusion protein, FarA, and an outer membrane component, MtrE.</text>
</comment>
<comment type="subcellular location">
    <subcellularLocation>
        <location evidence="6">Cell inner membrane</location>
        <topology evidence="1">Single-pass membrane protein</topology>
    </subcellularLocation>
</comment>
<comment type="induction">
    <text evidence="3 4">Expression is positively regulated by MtrR (PubMed:10447892, PubMed:14645274). MtrR acts by modulating the expression of the regulatory protein FarR, which directly controls the expression of the farAB operon (PubMed:14645274).</text>
</comment>
<comment type="similarity">
    <text evidence="6">Belongs to the membrane fusion protein (MFP) (TC 8.A.1) family.</text>
</comment>
<organism>
    <name type="scientific">Neisseria gonorrhoeae</name>
    <dbReference type="NCBI Taxonomy" id="485"/>
    <lineage>
        <taxon>Bacteria</taxon>
        <taxon>Pseudomonadati</taxon>
        <taxon>Pseudomonadota</taxon>
        <taxon>Betaproteobacteria</taxon>
        <taxon>Neisseriales</taxon>
        <taxon>Neisseriaceae</taxon>
        <taxon>Neisseria</taxon>
    </lineage>
</organism>
<dbReference type="EMBL" id="AF132909">
    <property type="protein sequence ID" value="AAD54073.1"/>
    <property type="molecule type" value="Genomic_DNA"/>
</dbReference>
<dbReference type="SMR" id="Q9RQ30"/>
<dbReference type="TCDB" id="8.A.1.1.2">
    <property type="family name" value="the membrane fusion protein (mfp) family"/>
</dbReference>
<dbReference type="GO" id="GO:0005886">
    <property type="term" value="C:plasma membrane"/>
    <property type="evidence" value="ECO:0007669"/>
    <property type="project" value="UniProtKB-SubCell"/>
</dbReference>
<dbReference type="GO" id="GO:0055085">
    <property type="term" value="P:transmembrane transport"/>
    <property type="evidence" value="ECO:0007669"/>
    <property type="project" value="InterPro"/>
</dbReference>
<dbReference type="FunFam" id="2.40.30.170:FF:000003">
    <property type="entry name" value="Multidrug resistance protein A"/>
    <property type="match status" value="1"/>
</dbReference>
<dbReference type="Gene3D" id="2.40.30.170">
    <property type="match status" value="1"/>
</dbReference>
<dbReference type="Gene3D" id="1.10.287.470">
    <property type="entry name" value="Helix hairpin bin"/>
    <property type="match status" value="1"/>
</dbReference>
<dbReference type="InterPro" id="IPR043602">
    <property type="entry name" value="CusB-like_dom_1"/>
</dbReference>
<dbReference type="InterPro" id="IPR050739">
    <property type="entry name" value="MFP"/>
</dbReference>
<dbReference type="PANTHER" id="PTHR30386">
    <property type="entry name" value="MEMBRANE FUSION SUBUNIT OF EMRAB-TOLC MULTIDRUG EFFLUX PUMP"/>
    <property type="match status" value="1"/>
</dbReference>
<dbReference type="PANTHER" id="PTHR30386:SF19">
    <property type="entry name" value="MULTIDRUG EXPORT PROTEIN EMRA-RELATED"/>
    <property type="match status" value="1"/>
</dbReference>
<dbReference type="Pfam" id="PF00529">
    <property type="entry name" value="CusB_dom_1"/>
    <property type="match status" value="1"/>
</dbReference>
<dbReference type="Pfam" id="PF13437">
    <property type="entry name" value="HlyD_3"/>
    <property type="match status" value="1"/>
</dbReference>
<dbReference type="SUPFAM" id="SSF111369">
    <property type="entry name" value="HlyD-like secretion proteins"/>
    <property type="match status" value="2"/>
</dbReference>
<keyword id="KW-0997">Cell inner membrane</keyword>
<keyword id="KW-1003">Cell membrane</keyword>
<keyword id="KW-0472">Membrane</keyword>
<keyword id="KW-0812">Transmembrane</keyword>
<keyword id="KW-1133">Transmembrane helix</keyword>
<keyword id="KW-0813">Transport</keyword>
<accession>Q9RQ30</accession>
<feature type="chain" id="PRO_0000445983" description="Fatty acid resistance protein FarA">
    <location>
        <begin position="1"/>
        <end position="394"/>
    </location>
</feature>
<feature type="transmembrane region" description="Helical" evidence="1">
    <location>
        <begin position="33"/>
        <end position="53"/>
    </location>
</feature>
<feature type="region of interest" description="Disordered" evidence="2">
    <location>
        <begin position="1"/>
        <end position="23"/>
    </location>
</feature>
<feature type="region of interest" description="Disordered" evidence="2">
    <location>
        <begin position="356"/>
        <end position="376"/>
    </location>
</feature>
<reference key="1">
    <citation type="journal article" date="1999" name="Mol. Microbiol.">
        <title>The farAB-encoded efflux pump mediates resistance of gonococci to long-chained antibacterial fatty acids.</title>
        <authorList>
            <person name="Lee E.H."/>
            <person name="Shafer W.M."/>
        </authorList>
    </citation>
    <scope>NUCLEOTIDE SEQUENCE [GENOMIC DNA]</scope>
    <scope>FUNCTION</scope>
    <scope>SUBUNIT</scope>
    <scope>INDUCTION</scope>
    <source>
        <strain>FA19</strain>
    </source>
</reference>
<reference key="2">
    <citation type="journal article" date="2003" name="J. Bacteriol.">
        <title>FarR regulates the farAB-encoded efflux pump of Neisseria gonorrhoeae via an MtrR regulatory mechanism.</title>
        <authorList>
            <person name="Lee E.H."/>
            <person name="Rouquette-Loughlin C."/>
            <person name="Folster J.P."/>
            <person name="Shafer W.M."/>
        </authorList>
    </citation>
    <scope>INDUCTION</scope>
    <source>
        <strain>FA19</strain>
    </source>
</reference>
<gene>
    <name evidence="5" type="primary">farA</name>
</gene>